<accession>P30432</accession>
<accession>A4V4M0</accession>
<accession>A4V4M2</accession>
<accession>Q24301</accession>
<accession>Q5BI10</accession>
<accession>Q8SZS2</accession>
<feature type="signal peptide" evidence="2">
    <location>
        <begin position="1"/>
        <end status="unknown"/>
    </location>
</feature>
<feature type="propeptide" id="PRO_0000027024" evidence="2">
    <location>
        <begin status="unknown"/>
        <end position="318"/>
    </location>
</feature>
<feature type="chain" id="PRO_0000027025" description="Furin-like protease 2">
    <location>
        <begin position="319"/>
        <end position="1679"/>
    </location>
</feature>
<feature type="transmembrane region" description="Helical" evidence="2">
    <location>
        <begin position="1512"/>
        <end position="1532"/>
    </location>
</feature>
<feature type="topological domain" description="Cytoplasmic" evidence="2">
    <location>
        <begin position="1533"/>
        <end position="1679"/>
    </location>
</feature>
<feature type="domain" description="Peptidase S8" evidence="4">
    <location>
        <begin position="383"/>
        <end position="705"/>
    </location>
</feature>
<feature type="domain" description="P/Homo B" evidence="3">
    <location>
        <begin position="714"/>
        <end position="852"/>
    </location>
</feature>
<feature type="repeat" description="FU 1">
    <location>
        <begin position="961"/>
        <end position="1006"/>
    </location>
</feature>
<feature type="repeat" description="FU 2">
    <location>
        <begin position="1009"/>
        <end position="1056"/>
    </location>
</feature>
<feature type="repeat" description="FU 3">
    <location>
        <begin position="1060"/>
        <end position="1104"/>
    </location>
</feature>
<feature type="repeat" description="FU 4">
    <location>
        <begin position="1107"/>
        <end position="1152"/>
    </location>
</feature>
<feature type="repeat" description="FU 5">
    <location>
        <begin position="1156"/>
        <end position="1204"/>
    </location>
</feature>
<feature type="repeat" description="FU 6">
    <location>
        <begin position="1208"/>
        <end position="1253"/>
    </location>
</feature>
<feature type="repeat" description="FU 7">
    <location>
        <begin position="1256"/>
        <end position="1299"/>
    </location>
</feature>
<feature type="repeat" description="FU 8">
    <location>
        <begin position="1301"/>
        <end position="1346"/>
    </location>
</feature>
<feature type="repeat" description="FU 9">
    <location>
        <begin position="1348"/>
        <end position="1393"/>
    </location>
</feature>
<feature type="repeat" description="FU 10">
    <location>
        <begin position="1396"/>
        <end position="1443"/>
    </location>
</feature>
<feature type="region of interest" description="Disordered" evidence="5">
    <location>
        <begin position="1"/>
        <end position="42"/>
    </location>
</feature>
<feature type="region of interest" description="Disordered" evidence="5">
    <location>
        <begin position="139"/>
        <end position="164"/>
    </location>
</feature>
<feature type="region of interest" description="Disordered" evidence="5">
    <location>
        <begin position="424"/>
        <end position="456"/>
    </location>
</feature>
<feature type="region of interest" description="Disordered" evidence="5">
    <location>
        <begin position="1660"/>
        <end position="1679"/>
    </location>
</feature>
<feature type="compositionally biased region" description="Polar residues" evidence="5">
    <location>
        <begin position="1"/>
        <end position="10"/>
    </location>
</feature>
<feature type="compositionally biased region" description="Low complexity" evidence="5">
    <location>
        <begin position="147"/>
        <end position="160"/>
    </location>
</feature>
<feature type="compositionally biased region" description="Polar residues" evidence="5">
    <location>
        <begin position="439"/>
        <end position="451"/>
    </location>
</feature>
<feature type="compositionally biased region" description="Polar residues" evidence="5">
    <location>
        <begin position="1668"/>
        <end position="1679"/>
    </location>
</feature>
<feature type="active site" description="Charge relay system" evidence="4">
    <location>
        <position position="417"/>
    </location>
</feature>
<feature type="active site" description="Charge relay system" evidence="4">
    <location>
        <position position="456"/>
    </location>
</feature>
<feature type="active site" description="Charge relay system" evidence="4">
    <location>
        <position position="637"/>
    </location>
</feature>
<feature type="glycosylation site" description="N-linked (GlcNAc...) asparagine" evidence="2">
    <location>
        <position position="3"/>
    </location>
</feature>
<feature type="glycosylation site" description="N-linked (GlcNAc...) asparagine" evidence="2">
    <location>
        <position position="109"/>
    </location>
</feature>
<feature type="glycosylation site" description="N-linked (GlcNAc...) asparagine" evidence="2">
    <location>
        <position position="130"/>
    </location>
</feature>
<feature type="glycosylation site" description="N-linked (GlcNAc...) asparagine" evidence="2">
    <location>
        <position position="205"/>
    </location>
</feature>
<feature type="glycosylation site" description="N-linked (GlcNAc...) asparagine" evidence="2">
    <location>
        <position position="442"/>
    </location>
</feature>
<feature type="glycosylation site" description="N-linked (GlcNAc...) asparagine" evidence="2">
    <location>
        <position position="480"/>
    </location>
</feature>
<feature type="glycosylation site" description="N-linked (GlcNAc...) asparagine" evidence="2">
    <location>
        <position position="927"/>
    </location>
</feature>
<feature type="glycosylation site" description="N-linked (GlcNAc...) asparagine" evidence="2">
    <location>
        <position position="1060"/>
    </location>
</feature>
<feature type="glycosylation site" description="N-linked (GlcNAc...) asparagine" evidence="2">
    <location>
        <position position="1181"/>
    </location>
</feature>
<feature type="glycosylation site" description="N-linked (GlcNAc...) asparagine" evidence="2">
    <location>
        <position position="1274"/>
    </location>
</feature>
<feature type="glycosylation site" description="N-linked (GlcNAc...) asparagine" evidence="2">
    <location>
        <position position="1277"/>
    </location>
</feature>
<feature type="glycosylation site" description="N-linked (GlcNAc...) asparagine" evidence="2">
    <location>
        <position position="1439"/>
    </location>
</feature>
<feature type="disulfide bond" evidence="1">
    <location>
        <begin position="473"/>
        <end position="629"/>
    </location>
</feature>
<feature type="disulfide bond" evidence="1">
    <location>
        <begin position="565"/>
        <end position="595"/>
    </location>
</feature>
<feature type="disulfide bond" evidence="1">
    <location>
        <begin position="720"/>
        <end position="748"/>
    </location>
</feature>
<feature type="splice variant" id="VSP_009365" description="In isoform A." evidence="6">
    <original>L</original>
    <variation>LVSK</variation>
    <location>
        <position position="386"/>
    </location>
</feature>
<feature type="sequence conflict" description="In Ref. 1; AAA28551." evidence="7" ref="1">
    <location>
        <begin position="152"/>
        <end position="153"/>
    </location>
</feature>
<feature type="sequence conflict" description="In Ref. 1; AAA28551." evidence="7" ref="1">
    <original>V</original>
    <variation>F</variation>
    <location>
        <position position="177"/>
    </location>
</feature>
<feature type="sequence conflict" description="In Ref. 1; AAA28551." evidence="7" ref="1">
    <original>V</original>
    <variation>VDQL</variation>
    <location>
        <position position="213"/>
    </location>
</feature>
<dbReference type="EC" id="3.4.21.75"/>
<dbReference type="EMBL" id="M94375">
    <property type="protein sequence ID" value="AAA28551.1"/>
    <property type="molecule type" value="mRNA"/>
</dbReference>
<dbReference type="EMBL" id="L33831">
    <property type="protein sequence ID" value="AAA69860.1"/>
    <property type="molecule type" value="Genomic_DNA"/>
</dbReference>
<dbReference type="EMBL" id="AE014298">
    <property type="protein sequence ID" value="AAF48598.2"/>
    <property type="molecule type" value="Genomic_DNA"/>
</dbReference>
<dbReference type="EMBL" id="AE014298">
    <property type="protein sequence ID" value="AAF48599.2"/>
    <property type="molecule type" value="Genomic_DNA"/>
</dbReference>
<dbReference type="EMBL" id="AE014298">
    <property type="protein sequence ID" value="AAN09399.1"/>
    <property type="molecule type" value="Genomic_DNA"/>
</dbReference>
<dbReference type="EMBL" id="AE014298">
    <property type="protein sequence ID" value="AAN09400.1"/>
    <property type="molecule type" value="Genomic_DNA"/>
</dbReference>
<dbReference type="EMBL" id="AE014298">
    <property type="protein sequence ID" value="AAN09401.1"/>
    <property type="molecule type" value="Genomic_DNA"/>
</dbReference>
<dbReference type="EMBL" id="AE014298">
    <property type="protein sequence ID" value="AAN09402.1"/>
    <property type="molecule type" value="Genomic_DNA"/>
</dbReference>
<dbReference type="EMBL" id="AE014298">
    <property type="protein sequence ID" value="AAS65387.1"/>
    <property type="molecule type" value="Genomic_DNA"/>
</dbReference>
<dbReference type="EMBL" id="BT021414">
    <property type="protein sequence ID" value="AAX33562.1"/>
    <property type="status" value="ALT_SEQ"/>
    <property type="molecule type" value="mRNA"/>
</dbReference>
<dbReference type="EMBL" id="AY070553">
    <property type="protein sequence ID" value="AAL48024.1"/>
    <property type="status" value="ALT_INIT"/>
    <property type="molecule type" value="mRNA"/>
</dbReference>
<dbReference type="PIR" id="A43434">
    <property type="entry name" value="A43434"/>
</dbReference>
<dbReference type="RefSeq" id="NP_523368.2">
    <molecule id="P30432-1"/>
    <property type="nucleotide sequence ID" value="NM_078644.4"/>
</dbReference>
<dbReference type="RefSeq" id="NP_727963.1">
    <molecule id="P30432-2"/>
    <property type="nucleotide sequence ID" value="NM_167506.3"/>
</dbReference>
<dbReference type="RefSeq" id="NP_727964.1">
    <molecule id="P30432-2"/>
    <property type="nucleotide sequence ID" value="NM_167507.3"/>
</dbReference>
<dbReference type="RefSeq" id="NP_727965.1">
    <molecule id="P30432-2"/>
    <property type="nucleotide sequence ID" value="NM_167508.2"/>
</dbReference>
<dbReference type="RefSeq" id="NP_727966.1">
    <molecule id="P30432-1"/>
    <property type="nucleotide sequence ID" value="NM_167509.3"/>
</dbReference>
<dbReference type="RefSeq" id="NP_727967.1">
    <molecule id="P30432-1"/>
    <property type="nucleotide sequence ID" value="NM_167510.3"/>
</dbReference>
<dbReference type="RefSeq" id="NP_996486.1">
    <molecule id="P30432-1"/>
    <property type="nucleotide sequence ID" value="NM_206763.2"/>
</dbReference>
<dbReference type="SMR" id="P30432"/>
<dbReference type="BioGRID" id="58944">
    <property type="interactions" value="19"/>
</dbReference>
<dbReference type="FunCoup" id="P30432">
    <property type="interactions" value="247"/>
</dbReference>
<dbReference type="IntAct" id="P30432">
    <property type="interactions" value="6"/>
</dbReference>
<dbReference type="STRING" id="7227.FBpp0074042"/>
<dbReference type="MEROPS" id="S08.049"/>
<dbReference type="GlyCosmos" id="P30432">
    <property type="glycosylation" value="12 sites, No reported glycans"/>
</dbReference>
<dbReference type="GlyGen" id="P30432">
    <property type="glycosylation" value="13 sites"/>
</dbReference>
<dbReference type="PaxDb" id="7227-FBpp0074038"/>
<dbReference type="EnsemblMetazoa" id="FBtr0074261">
    <molecule id="P30432-2"/>
    <property type="protein sequence ID" value="FBpp0074038"/>
    <property type="gene ID" value="FBgn0004598"/>
</dbReference>
<dbReference type="EnsemblMetazoa" id="FBtr0074262">
    <molecule id="P30432-1"/>
    <property type="protein sequence ID" value="FBpp0074039"/>
    <property type="gene ID" value="FBgn0004598"/>
</dbReference>
<dbReference type="EnsemblMetazoa" id="FBtr0074263">
    <molecule id="P30432-2"/>
    <property type="protein sequence ID" value="FBpp0074040"/>
    <property type="gene ID" value="FBgn0004598"/>
</dbReference>
<dbReference type="EnsemblMetazoa" id="FBtr0074264">
    <molecule id="P30432-1"/>
    <property type="protein sequence ID" value="FBpp0074041"/>
    <property type="gene ID" value="FBgn0004598"/>
</dbReference>
<dbReference type="EnsemblMetazoa" id="FBtr0074265">
    <molecule id="P30432-2"/>
    <property type="protein sequence ID" value="FBpp0074042"/>
    <property type="gene ID" value="FBgn0004598"/>
</dbReference>
<dbReference type="EnsemblMetazoa" id="FBtr0074266">
    <molecule id="P30432-1"/>
    <property type="protein sequence ID" value="FBpp0074043"/>
    <property type="gene ID" value="FBgn0004598"/>
</dbReference>
<dbReference type="EnsemblMetazoa" id="FBtr0074267">
    <molecule id="P30432-1"/>
    <property type="protein sequence ID" value="FBpp0089399"/>
    <property type="gene ID" value="FBgn0004598"/>
</dbReference>
<dbReference type="GeneID" id="32604"/>
<dbReference type="KEGG" id="dme:Dmel_CG18734"/>
<dbReference type="AGR" id="FB:FBgn0004598"/>
<dbReference type="CTD" id="32604"/>
<dbReference type="FlyBase" id="FBgn0004598">
    <property type="gene designation" value="Fur2"/>
</dbReference>
<dbReference type="VEuPathDB" id="VectorBase:FBgn0004598"/>
<dbReference type="eggNOG" id="KOG3525">
    <property type="taxonomic scope" value="Eukaryota"/>
</dbReference>
<dbReference type="GeneTree" id="ENSGT00940000167869"/>
<dbReference type="InParanoid" id="P30432"/>
<dbReference type="OMA" id="SECLENW"/>
<dbReference type="OrthoDB" id="300641at2759"/>
<dbReference type="PhylomeDB" id="P30432"/>
<dbReference type="BioGRID-ORCS" id="32604">
    <property type="hits" value="0 hits in 3 CRISPR screens"/>
</dbReference>
<dbReference type="GenomeRNAi" id="32604"/>
<dbReference type="PRO" id="PR:P30432"/>
<dbReference type="Proteomes" id="UP000000803">
    <property type="component" value="Chromosome X"/>
</dbReference>
<dbReference type="Bgee" id="FBgn0004598">
    <property type="expression patterns" value="Expressed in dorsal appendage forming follicle cell in ovary and 208 other cell types or tissues"/>
</dbReference>
<dbReference type="ExpressionAtlas" id="P30432">
    <property type="expression patterns" value="baseline and differential"/>
</dbReference>
<dbReference type="GO" id="GO:0000139">
    <property type="term" value="C:Golgi membrane"/>
    <property type="evidence" value="ECO:0000318"/>
    <property type="project" value="GO_Central"/>
</dbReference>
<dbReference type="GO" id="GO:0005886">
    <property type="term" value="C:plasma membrane"/>
    <property type="evidence" value="ECO:0000250"/>
    <property type="project" value="FlyBase"/>
</dbReference>
<dbReference type="GO" id="GO:0005802">
    <property type="term" value="C:trans-Golgi network"/>
    <property type="evidence" value="ECO:0000318"/>
    <property type="project" value="GO_Central"/>
</dbReference>
<dbReference type="GO" id="GO:0004252">
    <property type="term" value="F:serine-type endopeptidase activity"/>
    <property type="evidence" value="ECO:0000314"/>
    <property type="project" value="FlyBase"/>
</dbReference>
<dbReference type="GO" id="GO:0051048">
    <property type="term" value="P:negative regulation of secretion"/>
    <property type="evidence" value="ECO:0000316"/>
    <property type="project" value="FlyBase"/>
</dbReference>
<dbReference type="GO" id="GO:0016485">
    <property type="term" value="P:protein processing"/>
    <property type="evidence" value="ECO:0000318"/>
    <property type="project" value="GO_Central"/>
</dbReference>
<dbReference type="GO" id="GO:0045464">
    <property type="term" value="P:R8 cell fate specification"/>
    <property type="evidence" value="ECO:0000315"/>
    <property type="project" value="FlyBase"/>
</dbReference>
<dbReference type="CDD" id="cd00064">
    <property type="entry name" value="FU"/>
    <property type="match status" value="9"/>
</dbReference>
<dbReference type="CDD" id="cd04059">
    <property type="entry name" value="Peptidases_S8_Protein_convertases_Kexins_Furin-like"/>
    <property type="match status" value="1"/>
</dbReference>
<dbReference type="FunFam" id="3.40.50.200:FF:000001">
    <property type="entry name" value="Furin 2, isoform B"/>
    <property type="match status" value="1"/>
</dbReference>
<dbReference type="FunFam" id="2.10.220.10:FF:000020">
    <property type="entry name" value="Furin-like protease 2"/>
    <property type="match status" value="1"/>
</dbReference>
<dbReference type="FunFam" id="2.10.220.10:FF:000055">
    <property type="entry name" value="Furin-like protease 2"/>
    <property type="match status" value="1"/>
</dbReference>
<dbReference type="FunFam" id="2.10.220.10:FF:000096">
    <property type="entry name" value="Furin-like protease 2"/>
    <property type="match status" value="1"/>
</dbReference>
<dbReference type="FunFam" id="2.60.120.260:FF:000072">
    <property type="entry name" value="Proprotein convertase subtilisin/kexin type"/>
    <property type="match status" value="1"/>
</dbReference>
<dbReference type="FunFam" id="3.30.70.850:FF:000001">
    <property type="entry name" value="Proprotein convertase subtilisin/kexin type 5"/>
    <property type="match status" value="1"/>
</dbReference>
<dbReference type="Gene3D" id="2.60.120.260">
    <property type="entry name" value="Galactose-binding domain-like"/>
    <property type="match status" value="1"/>
</dbReference>
<dbReference type="Gene3D" id="2.10.220.10">
    <property type="entry name" value="Hormone Receptor, Insulin-like Growth Factor Receptor 1, Chain A, domain 2"/>
    <property type="match status" value="7"/>
</dbReference>
<dbReference type="Gene3D" id="3.30.70.850">
    <property type="entry name" value="Peptidase S8, pro-domain"/>
    <property type="match status" value="1"/>
</dbReference>
<dbReference type="Gene3D" id="3.40.50.200">
    <property type="entry name" value="Peptidase S8/S53 domain"/>
    <property type="match status" value="1"/>
</dbReference>
<dbReference type="InterPro" id="IPR000742">
    <property type="entry name" value="EGF-like_dom"/>
</dbReference>
<dbReference type="InterPro" id="IPR006212">
    <property type="entry name" value="Furin_repeat"/>
</dbReference>
<dbReference type="InterPro" id="IPR008979">
    <property type="entry name" value="Galactose-bd-like_sf"/>
</dbReference>
<dbReference type="InterPro" id="IPR032778">
    <property type="entry name" value="GF_recep_IV"/>
</dbReference>
<dbReference type="InterPro" id="IPR009030">
    <property type="entry name" value="Growth_fac_rcpt_cys_sf"/>
</dbReference>
<dbReference type="InterPro" id="IPR034182">
    <property type="entry name" value="Kexin/furin"/>
</dbReference>
<dbReference type="InterPro" id="IPR002884">
    <property type="entry name" value="P_dom"/>
</dbReference>
<dbReference type="InterPro" id="IPR000209">
    <property type="entry name" value="Peptidase_S8/S53_dom"/>
</dbReference>
<dbReference type="InterPro" id="IPR036852">
    <property type="entry name" value="Peptidase_S8/S53_dom_sf"/>
</dbReference>
<dbReference type="InterPro" id="IPR023827">
    <property type="entry name" value="Peptidase_S8_Asp-AS"/>
</dbReference>
<dbReference type="InterPro" id="IPR022398">
    <property type="entry name" value="Peptidase_S8_His-AS"/>
</dbReference>
<dbReference type="InterPro" id="IPR023828">
    <property type="entry name" value="Peptidase_S8_Ser-AS"/>
</dbReference>
<dbReference type="InterPro" id="IPR015500">
    <property type="entry name" value="Peptidase_S8_subtilisin-rel"/>
</dbReference>
<dbReference type="InterPro" id="IPR032815">
    <property type="entry name" value="S8_pro-domain"/>
</dbReference>
<dbReference type="InterPro" id="IPR038466">
    <property type="entry name" value="S8_pro-domain_sf"/>
</dbReference>
<dbReference type="PANTHER" id="PTHR42884:SF23">
    <property type="entry name" value="FURIN-LIKE PROTEASE 2"/>
    <property type="match status" value="1"/>
</dbReference>
<dbReference type="PANTHER" id="PTHR42884">
    <property type="entry name" value="PROPROTEIN CONVERTASE SUBTILISIN/KEXIN-RELATED"/>
    <property type="match status" value="1"/>
</dbReference>
<dbReference type="Pfam" id="PF14843">
    <property type="entry name" value="GF_recep_IV"/>
    <property type="match status" value="1"/>
</dbReference>
<dbReference type="Pfam" id="PF01483">
    <property type="entry name" value="P_proprotein"/>
    <property type="match status" value="1"/>
</dbReference>
<dbReference type="Pfam" id="PF00082">
    <property type="entry name" value="Peptidase_S8"/>
    <property type="match status" value="1"/>
</dbReference>
<dbReference type="Pfam" id="PF16470">
    <property type="entry name" value="S8_pro-domain"/>
    <property type="match status" value="1"/>
</dbReference>
<dbReference type="PRINTS" id="PR00723">
    <property type="entry name" value="SUBTILISIN"/>
</dbReference>
<dbReference type="SMART" id="SM00181">
    <property type="entry name" value="EGF"/>
    <property type="match status" value="8"/>
</dbReference>
<dbReference type="SMART" id="SM00261">
    <property type="entry name" value="FU"/>
    <property type="match status" value="10"/>
</dbReference>
<dbReference type="SUPFAM" id="SSF49785">
    <property type="entry name" value="Galactose-binding domain-like"/>
    <property type="match status" value="1"/>
</dbReference>
<dbReference type="SUPFAM" id="SSF57184">
    <property type="entry name" value="Growth factor receptor domain"/>
    <property type="match status" value="3"/>
</dbReference>
<dbReference type="SUPFAM" id="SSF54897">
    <property type="entry name" value="Protease propeptides/inhibitors"/>
    <property type="match status" value="1"/>
</dbReference>
<dbReference type="SUPFAM" id="SSF52743">
    <property type="entry name" value="Subtilisin-like"/>
    <property type="match status" value="1"/>
</dbReference>
<dbReference type="PROSITE" id="PS51829">
    <property type="entry name" value="P_HOMO_B"/>
    <property type="match status" value="1"/>
</dbReference>
<dbReference type="PROSITE" id="PS51892">
    <property type="entry name" value="SUBTILASE"/>
    <property type="match status" value="1"/>
</dbReference>
<dbReference type="PROSITE" id="PS00136">
    <property type="entry name" value="SUBTILASE_ASP"/>
    <property type="match status" value="1"/>
</dbReference>
<dbReference type="PROSITE" id="PS00137">
    <property type="entry name" value="SUBTILASE_HIS"/>
    <property type="match status" value="1"/>
</dbReference>
<dbReference type="PROSITE" id="PS00138">
    <property type="entry name" value="SUBTILASE_SER"/>
    <property type="match status" value="1"/>
</dbReference>
<comment type="function">
    <text evidence="1">Furin is likely to represent the ubiquitous endoprotease activity within constitutive secretory pathways and capable of cleavage at the RX(K/R)R consensus motif.</text>
</comment>
<comment type="catalytic activity">
    <reaction>
        <text>Release of mature proteins from their proproteins by cleavage of -Arg-Xaa-Yaa-Arg-|-Zaa- bonds, where Xaa can be any amino acid and Yaa is Arg or Lys. Releases albumin, complement component C3 and von Willebrand factor from their respective precursors.</text>
        <dbReference type="EC" id="3.4.21.75"/>
    </reaction>
</comment>
<comment type="cofactor">
    <cofactor evidence="1">
        <name>Ca(2+)</name>
        <dbReference type="ChEBI" id="CHEBI:29108"/>
    </cofactor>
</comment>
<comment type="subcellular location">
    <subcellularLocation>
        <location evidence="7">Membrane</location>
        <topology evidence="7">Single-pass membrane protein</topology>
    </subcellularLocation>
</comment>
<comment type="alternative products">
    <event type="alternative splicing"/>
    <isoform>
        <id>P30432-1</id>
        <name>D</name>
        <name>E</name>
        <name>F</name>
        <name>G</name>
        <sequence type="displayed"/>
    </isoform>
    <isoform>
        <id>P30432-2</id>
        <name>A</name>
        <name>B</name>
        <name>C</name>
        <sequence type="described" ref="VSP_009365"/>
    </isoform>
</comment>
<comment type="tissue specificity">
    <text>Transient expression in a subset of central nervous system neurons during embryonic stages 12-13. Expression in developing tracheal tree from stage 13 to end of embryonic development.</text>
</comment>
<comment type="developmental stage">
    <text>Expressed both maternally and zygotically.</text>
</comment>
<comment type="similarity">
    <text evidence="7">Belongs to the peptidase S8 family. Furin subfamily.</text>
</comment>
<comment type="sequence caution" evidence="7">
    <conflict type="erroneous initiation">
        <sequence resource="EMBL-CDS" id="AAL48024"/>
    </conflict>
</comment>
<comment type="sequence caution" evidence="7">
    <conflict type="miscellaneous discrepancy">
        <sequence resource="EMBL-CDS" id="AAX33562"/>
    </conflict>
    <text>Intron retention.</text>
</comment>
<evidence type="ECO:0000250" key="1"/>
<evidence type="ECO:0000255" key="2"/>
<evidence type="ECO:0000255" key="3">
    <source>
        <dbReference type="PROSITE-ProRule" id="PRU01173"/>
    </source>
</evidence>
<evidence type="ECO:0000255" key="4">
    <source>
        <dbReference type="PROSITE-ProRule" id="PRU01240"/>
    </source>
</evidence>
<evidence type="ECO:0000256" key="5">
    <source>
        <dbReference type="SAM" id="MobiDB-lite"/>
    </source>
</evidence>
<evidence type="ECO:0000303" key="6">
    <source>
    </source>
</evidence>
<evidence type="ECO:0000305" key="7"/>
<gene>
    <name type="primary">Fur2</name>
    <name type="ORF">CG18734</name>
</gene>
<protein>
    <recommendedName>
        <fullName>Furin-like protease 2</fullName>
        <shortName>Furin-2</shortName>
        <ecNumber>3.4.21.75</ecNumber>
    </recommendedName>
</protein>
<keyword id="KW-0025">Alternative splicing</keyword>
<keyword id="KW-0165">Cleavage on pair of basic residues</keyword>
<keyword id="KW-1015">Disulfide bond</keyword>
<keyword id="KW-0325">Glycoprotein</keyword>
<keyword id="KW-0378">Hydrolase</keyword>
<keyword id="KW-0472">Membrane</keyword>
<keyword id="KW-0645">Protease</keyword>
<keyword id="KW-1185">Reference proteome</keyword>
<keyword id="KW-0677">Repeat</keyword>
<keyword id="KW-0720">Serine protease</keyword>
<keyword id="KW-0732">Signal</keyword>
<keyword id="KW-0812">Transmembrane</keyword>
<keyword id="KW-1133">Transmembrane helix</keyword>
<keyword id="KW-0865">Zymogen</keyword>
<sequence>MSNTTRSSRVTIGRIGTTPQITDPWSSGLEKQRPSRCGGPKSLAEPTYRKIGRRKMMLHMRVHDPGTTVTQRAKETATAKLNRIYLCTFNRMAQSCIYFVLFLVILSPNTSCALRSSAGETQNYVGILSNDSATTTYDVSSLHSSRRTNPPSSSSSSSSNVDVDYRNDRELHKVDLVGLGGERAGQAETISGGKYDYNYENTHTNASAKDEIVERQSNSLDFDGVDMFGAFSIPEEAIYTNEFAVNIPAGKQMADVIATKHGFINRGQIGSLDNYYLFQHHHVSKRSLRSSRKHQGALKSENEVKWMQQQHEKVRRKRDGPYQDLPTYSPYNLLRQHGGYVVDPNPHLSFSPESISLASHSQRMEYRDVSSHFIFPDPLFKEQWYLNGGAKDGLDMNVGPAWQKGYTGKGVVVSILDDGIQTNHPDLAQNYDPEASFDINGNDSDPTPQDNGDNKHGTRCAGEVAAVAFNNFCGVGVAYNASIGGVRMLDGKVNDVVEAQALSLNPSHIDIYSASWGPEDDGSTVDGPGPLARRAFIYGVTSGRQGKGSIFVWASGNGGRYTDSCNCDGYTNSIFTLSISSATQAGFKPWYLEECSSTLATTYSSGTPGHDKSVATVDMDGSLRPDHICTVEHTGTSASAPLAAGICALALEANPELTWRDMQYLVVYTSRPAPLEKENGWTLNGVKRKYSHKFGYGLMDAGAMVSLAEQWTSVPPQHICKSRENNEDRKIDGAYGSTLSTHMDVNGCAGTINEVRYLEHVQCRITLRFFPRGNLRILLTSPMGTTSTLLFERPRDIVKSNFDDWPFLSVHFWGEKAEGRWTLQVINGGRRRVNQPGILSKWQLIFYGTSTQPMRLKSELLNSSPQLRSPSSSNPFLFPSASNIGQPANEGGNFNTDSFASYLNYQNIFSSAGSDPEPATATLDGQNVTAAIAGGSSAESLGFTASAAQLVAAPETRDGDKKILHSCDAECDSSGCYGRGPTQCVACSHYRLDNTCVSRCPPRSFPNQVGICWPCHDTCETCAGAGPDSCLTCAPAHLHVIDLAVCLQFCPDGYFENSRNRTCVPCEPNCASCQDHPEYCTSCDHHLVMHEHKCYSACPLDTYETEDNKCAFCHSTCATCNGPTDQDCITCRSSRYAWQNKCLISCPDGFYADKKRLECMPCQEGCKTCTSNGVCSECLQNWTLNKRDKCIVSGSEGCSESEFYSQVEGQCRPCHASCGSCNGPADTSCTSCPPNRLLEQSRCVSGCREGFFVEAGSLCSPCLHTCSQCVSRTNCSNCSKGLELQNGECRTTCADGYYSDRGICAKCYLSCHTCSGPRRNQCVQCPAGWQLAAGECHPECPEGFYKSDFGCQKCHHYCKTCNDAGPLACTSCPPHSMLDGGLCMECLSSQYYDTTSATCKTCHDSCRSCFGPGQFSCKGCVPPLHLDQLNSQCVSCCQNQTLAEKTSSAACCNCDGETGECKATSTGGKRRTVVGSGSAYKSSESKHGSFENDGNAREFVLRLDSPLTAITAIAVAICLLIITIFSIIFAVLQRNSNHVSRNSVRYRKIANTSSGRRKNLSAKPTSDARFIFNIGEDDDTDGDNSDDELDGNVGTDINNRIVYDRKGNDHGHEFYIESTNDIDAIEFHCNGAGAQKAETQLQRCNANGDDDDILHYDRHTNAERKNHPSSTTSRTNIRS</sequence>
<name>FUR2_DROME</name>
<proteinExistence type="evidence at transcript level"/>
<reference key="1">
    <citation type="journal article" date="1992" name="J. Biol. Chem.">
        <title>Cloning and functional expression of Dfurin2, a subtilisin-like proprotein processing enzyme of Drosophila melanogaster with multiple repeats of a cysteine motif.</title>
        <authorList>
            <person name="Roebroek A.J.M."/>
            <person name="Creemers J.W.M."/>
            <person name="Pauli I.G.L."/>
            <person name="Kurzik-Dumke U."/>
            <person name="Rentrop M."/>
            <person name="Gateff E.A.F."/>
            <person name="Leunissen J.A.M."/>
            <person name="van de Ven W.J.M."/>
        </authorList>
    </citation>
    <scope>NUCLEOTIDE SEQUENCE [MRNA] (ISOFORM D)</scope>
    <source>
        <strain>Iso-1</strain>
        <strain>Oregon-R</strain>
        <strain>Tuebingen</strain>
        <tissue>Embryo</tissue>
    </source>
</reference>
<reference key="2">
    <citation type="journal article" date="1995" name="DNA Cell Biol.">
        <title>The Dfur2 gene of Drosophila melanogaster: genetic organization, expression during embryogenesis, and pro-protein processing activity of its translational product Dfurin2.</title>
        <authorList>
            <person name="Roebroek A.J.M."/>
            <person name="Ayoubi T.A.Y."/>
            <person name="Creemers J.W.M."/>
            <person name="Pauli I.G.L."/>
            <person name="van de Ven W.J.M."/>
        </authorList>
    </citation>
    <scope>NUCLEOTIDE SEQUENCE [GENOMIC DNA]</scope>
    <source>
        <strain>Iso-1</strain>
    </source>
</reference>
<reference key="3">
    <citation type="journal article" date="2000" name="Science">
        <title>The genome sequence of Drosophila melanogaster.</title>
        <authorList>
            <person name="Adams M.D."/>
            <person name="Celniker S.E."/>
            <person name="Holt R.A."/>
            <person name="Evans C.A."/>
            <person name="Gocayne J.D."/>
            <person name="Amanatides P.G."/>
            <person name="Scherer S.E."/>
            <person name="Li P.W."/>
            <person name="Hoskins R.A."/>
            <person name="Galle R.F."/>
            <person name="George R.A."/>
            <person name="Lewis S.E."/>
            <person name="Richards S."/>
            <person name="Ashburner M."/>
            <person name="Henderson S.N."/>
            <person name="Sutton G.G."/>
            <person name="Wortman J.R."/>
            <person name="Yandell M.D."/>
            <person name="Zhang Q."/>
            <person name="Chen L.X."/>
            <person name="Brandon R.C."/>
            <person name="Rogers Y.-H.C."/>
            <person name="Blazej R.G."/>
            <person name="Champe M."/>
            <person name="Pfeiffer B.D."/>
            <person name="Wan K.H."/>
            <person name="Doyle C."/>
            <person name="Baxter E.G."/>
            <person name="Helt G."/>
            <person name="Nelson C.R."/>
            <person name="Miklos G.L.G."/>
            <person name="Abril J.F."/>
            <person name="Agbayani A."/>
            <person name="An H.-J."/>
            <person name="Andrews-Pfannkoch C."/>
            <person name="Baldwin D."/>
            <person name="Ballew R.M."/>
            <person name="Basu A."/>
            <person name="Baxendale J."/>
            <person name="Bayraktaroglu L."/>
            <person name="Beasley E.M."/>
            <person name="Beeson K.Y."/>
            <person name="Benos P.V."/>
            <person name="Berman B.P."/>
            <person name="Bhandari D."/>
            <person name="Bolshakov S."/>
            <person name="Borkova D."/>
            <person name="Botchan M.R."/>
            <person name="Bouck J."/>
            <person name="Brokstein P."/>
            <person name="Brottier P."/>
            <person name="Burtis K.C."/>
            <person name="Busam D.A."/>
            <person name="Butler H."/>
            <person name="Cadieu E."/>
            <person name="Center A."/>
            <person name="Chandra I."/>
            <person name="Cherry J.M."/>
            <person name="Cawley S."/>
            <person name="Dahlke C."/>
            <person name="Davenport L.B."/>
            <person name="Davies P."/>
            <person name="de Pablos B."/>
            <person name="Delcher A."/>
            <person name="Deng Z."/>
            <person name="Mays A.D."/>
            <person name="Dew I."/>
            <person name="Dietz S.M."/>
            <person name="Dodson K."/>
            <person name="Doup L.E."/>
            <person name="Downes M."/>
            <person name="Dugan-Rocha S."/>
            <person name="Dunkov B.C."/>
            <person name="Dunn P."/>
            <person name="Durbin K.J."/>
            <person name="Evangelista C.C."/>
            <person name="Ferraz C."/>
            <person name="Ferriera S."/>
            <person name="Fleischmann W."/>
            <person name="Fosler C."/>
            <person name="Gabrielian A.E."/>
            <person name="Garg N.S."/>
            <person name="Gelbart W.M."/>
            <person name="Glasser K."/>
            <person name="Glodek A."/>
            <person name="Gong F."/>
            <person name="Gorrell J.H."/>
            <person name="Gu Z."/>
            <person name="Guan P."/>
            <person name="Harris M."/>
            <person name="Harris N.L."/>
            <person name="Harvey D.A."/>
            <person name="Heiman T.J."/>
            <person name="Hernandez J.R."/>
            <person name="Houck J."/>
            <person name="Hostin D."/>
            <person name="Houston K.A."/>
            <person name="Howland T.J."/>
            <person name="Wei M.-H."/>
            <person name="Ibegwam C."/>
            <person name="Jalali M."/>
            <person name="Kalush F."/>
            <person name="Karpen G.H."/>
            <person name="Ke Z."/>
            <person name="Kennison J.A."/>
            <person name="Ketchum K.A."/>
            <person name="Kimmel B.E."/>
            <person name="Kodira C.D."/>
            <person name="Kraft C.L."/>
            <person name="Kravitz S."/>
            <person name="Kulp D."/>
            <person name="Lai Z."/>
            <person name="Lasko P."/>
            <person name="Lei Y."/>
            <person name="Levitsky A.A."/>
            <person name="Li J.H."/>
            <person name="Li Z."/>
            <person name="Liang Y."/>
            <person name="Lin X."/>
            <person name="Liu X."/>
            <person name="Mattei B."/>
            <person name="McIntosh T.C."/>
            <person name="McLeod M.P."/>
            <person name="McPherson D."/>
            <person name="Merkulov G."/>
            <person name="Milshina N.V."/>
            <person name="Mobarry C."/>
            <person name="Morris J."/>
            <person name="Moshrefi A."/>
            <person name="Mount S.M."/>
            <person name="Moy M."/>
            <person name="Murphy B."/>
            <person name="Murphy L."/>
            <person name="Muzny D.M."/>
            <person name="Nelson D.L."/>
            <person name="Nelson D.R."/>
            <person name="Nelson K.A."/>
            <person name="Nixon K."/>
            <person name="Nusskern D.R."/>
            <person name="Pacleb J.M."/>
            <person name="Palazzolo M."/>
            <person name="Pittman G.S."/>
            <person name="Pan S."/>
            <person name="Pollard J."/>
            <person name="Puri V."/>
            <person name="Reese M.G."/>
            <person name="Reinert K."/>
            <person name="Remington K."/>
            <person name="Saunders R.D.C."/>
            <person name="Scheeler F."/>
            <person name="Shen H."/>
            <person name="Shue B.C."/>
            <person name="Siden-Kiamos I."/>
            <person name="Simpson M."/>
            <person name="Skupski M.P."/>
            <person name="Smith T.J."/>
            <person name="Spier E."/>
            <person name="Spradling A.C."/>
            <person name="Stapleton M."/>
            <person name="Strong R."/>
            <person name="Sun E."/>
            <person name="Svirskas R."/>
            <person name="Tector C."/>
            <person name="Turner R."/>
            <person name="Venter E."/>
            <person name="Wang A.H."/>
            <person name="Wang X."/>
            <person name="Wang Z.-Y."/>
            <person name="Wassarman D.A."/>
            <person name="Weinstock G.M."/>
            <person name="Weissenbach J."/>
            <person name="Williams S.M."/>
            <person name="Woodage T."/>
            <person name="Worley K.C."/>
            <person name="Wu D."/>
            <person name="Yang S."/>
            <person name="Yao Q.A."/>
            <person name="Ye J."/>
            <person name="Yeh R.-F."/>
            <person name="Zaveri J.S."/>
            <person name="Zhan M."/>
            <person name="Zhang G."/>
            <person name="Zhao Q."/>
            <person name="Zheng L."/>
            <person name="Zheng X.H."/>
            <person name="Zhong F.N."/>
            <person name="Zhong W."/>
            <person name="Zhou X."/>
            <person name="Zhu S.C."/>
            <person name="Zhu X."/>
            <person name="Smith H.O."/>
            <person name="Gibbs R.A."/>
            <person name="Myers E.W."/>
            <person name="Rubin G.M."/>
            <person name="Venter J.C."/>
        </authorList>
    </citation>
    <scope>NUCLEOTIDE SEQUENCE [LARGE SCALE GENOMIC DNA]</scope>
    <source>
        <strain>Berkeley</strain>
    </source>
</reference>
<reference key="4">
    <citation type="journal article" date="2002" name="Genome Biol.">
        <title>Annotation of the Drosophila melanogaster euchromatic genome: a systematic review.</title>
        <authorList>
            <person name="Misra S."/>
            <person name="Crosby M.A."/>
            <person name="Mungall C.J."/>
            <person name="Matthews B.B."/>
            <person name="Campbell K.S."/>
            <person name="Hradecky P."/>
            <person name="Huang Y."/>
            <person name="Kaminker J.S."/>
            <person name="Millburn G.H."/>
            <person name="Prochnik S.E."/>
            <person name="Smith C.D."/>
            <person name="Tupy J.L."/>
            <person name="Whitfield E.J."/>
            <person name="Bayraktaroglu L."/>
            <person name="Berman B.P."/>
            <person name="Bettencourt B.R."/>
            <person name="Celniker S.E."/>
            <person name="de Grey A.D.N.J."/>
            <person name="Drysdale R.A."/>
            <person name="Harris N.L."/>
            <person name="Richter J."/>
            <person name="Russo S."/>
            <person name="Schroeder A.J."/>
            <person name="Shu S.Q."/>
            <person name="Stapleton M."/>
            <person name="Yamada C."/>
            <person name="Ashburner M."/>
            <person name="Gelbart W.M."/>
            <person name="Rubin G.M."/>
            <person name="Lewis S.E."/>
        </authorList>
    </citation>
    <scope>GENOME REANNOTATION</scope>
    <scope>ALTERNATIVE SPLICING</scope>
    <source>
        <strain>Berkeley</strain>
    </source>
</reference>
<reference key="5">
    <citation type="submission" date="2005-03" db="EMBL/GenBank/DDBJ databases">
        <authorList>
            <person name="Stapleton M."/>
            <person name="Carlson J.W."/>
            <person name="Chavez C."/>
            <person name="Frise E."/>
            <person name="George R.A."/>
            <person name="Pacleb J.M."/>
            <person name="Park S."/>
            <person name="Wan K.H."/>
            <person name="Yu C."/>
            <person name="Rubin G.M."/>
            <person name="Celniker S.E."/>
        </authorList>
    </citation>
    <scope>NUCLEOTIDE SEQUENCE [LARGE SCALE MRNA] (ISOFORM D)</scope>
    <source>
        <strain>Berkeley</strain>
        <tissue>Embryo</tissue>
    </source>
</reference>
<reference key="6">
    <citation type="journal article" date="2002" name="Genome Biol.">
        <title>A Drosophila full-length cDNA resource.</title>
        <authorList>
            <person name="Stapleton M."/>
            <person name="Carlson J.W."/>
            <person name="Brokstein P."/>
            <person name="Yu C."/>
            <person name="Champe M."/>
            <person name="George R.A."/>
            <person name="Guarin H."/>
            <person name="Kronmiller B."/>
            <person name="Pacleb J.M."/>
            <person name="Park S."/>
            <person name="Wan K.H."/>
            <person name="Rubin G.M."/>
            <person name="Celniker S.E."/>
        </authorList>
    </citation>
    <scope>NUCLEOTIDE SEQUENCE [LARGE SCALE MRNA] OF 305-1679 (ISOFORM A)</scope>
    <source>
        <strain>Berkeley</strain>
        <tissue>Embryo</tissue>
    </source>
</reference>
<organism>
    <name type="scientific">Drosophila melanogaster</name>
    <name type="common">Fruit fly</name>
    <dbReference type="NCBI Taxonomy" id="7227"/>
    <lineage>
        <taxon>Eukaryota</taxon>
        <taxon>Metazoa</taxon>
        <taxon>Ecdysozoa</taxon>
        <taxon>Arthropoda</taxon>
        <taxon>Hexapoda</taxon>
        <taxon>Insecta</taxon>
        <taxon>Pterygota</taxon>
        <taxon>Neoptera</taxon>
        <taxon>Endopterygota</taxon>
        <taxon>Diptera</taxon>
        <taxon>Brachycera</taxon>
        <taxon>Muscomorpha</taxon>
        <taxon>Ephydroidea</taxon>
        <taxon>Drosophilidae</taxon>
        <taxon>Drosophila</taxon>
        <taxon>Sophophora</taxon>
    </lineage>
</organism>